<proteinExistence type="inferred from homology"/>
<protein>
    <recommendedName>
        <fullName evidence="1">GTP cyclohydrolase-2</fullName>
        <ecNumber evidence="1">3.5.4.25</ecNumber>
    </recommendedName>
    <alternativeName>
        <fullName evidence="1">GTP cyclohydrolase II</fullName>
    </alternativeName>
</protein>
<sequence>MQLKRVAEAKLPTPLGDFLMVGFEELATGHDHAALVFGDISGKTPVLARVHSECLTGDALFSLRCDCGFQLEAALTHIAEEGRGILIYHRQEGRNIGLLNKIRAYALQDQGYDTVEANHQLGFAADERDFTLCADMFKLLGVDEVRLLTNNPKKVEILTEAGINIVERVPLIVGRNPNNEHYLDTKAAKMGHLLSK</sequence>
<organism>
    <name type="scientific">Salmonella paratyphi A (strain ATCC 9150 / SARB42)</name>
    <dbReference type="NCBI Taxonomy" id="295319"/>
    <lineage>
        <taxon>Bacteria</taxon>
        <taxon>Pseudomonadati</taxon>
        <taxon>Pseudomonadota</taxon>
        <taxon>Gammaproteobacteria</taxon>
        <taxon>Enterobacterales</taxon>
        <taxon>Enterobacteriaceae</taxon>
        <taxon>Salmonella</taxon>
    </lineage>
</organism>
<feature type="chain" id="PRO_0000151772" description="GTP cyclohydrolase-2">
    <location>
        <begin position="1"/>
        <end position="196"/>
    </location>
</feature>
<feature type="active site" description="Proton acceptor" evidence="1">
    <location>
        <position position="126"/>
    </location>
</feature>
<feature type="active site" description="Nucleophile" evidence="1">
    <location>
        <position position="128"/>
    </location>
</feature>
<feature type="binding site" evidence="1">
    <location>
        <begin position="49"/>
        <end position="53"/>
    </location>
    <ligand>
        <name>GTP</name>
        <dbReference type="ChEBI" id="CHEBI:37565"/>
    </ligand>
</feature>
<feature type="binding site" evidence="1">
    <location>
        <position position="54"/>
    </location>
    <ligand>
        <name>Zn(2+)</name>
        <dbReference type="ChEBI" id="CHEBI:29105"/>
        <note>catalytic</note>
    </ligand>
</feature>
<feature type="binding site" evidence="1">
    <location>
        <position position="65"/>
    </location>
    <ligand>
        <name>Zn(2+)</name>
        <dbReference type="ChEBI" id="CHEBI:29105"/>
        <note>catalytic</note>
    </ligand>
</feature>
<feature type="binding site" evidence="1">
    <location>
        <position position="67"/>
    </location>
    <ligand>
        <name>Zn(2+)</name>
        <dbReference type="ChEBI" id="CHEBI:29105"/>
        <note>catalytic</note>
    </ligand>
</feature>
<feature type="binding site" evidence="1">
    <location>
        <position position="70"/>
    </location>
    <ligand>
        <name>GTP</name>
        <dbReference type="ChEBI" id="CHEBI:37565"/>
    </ligand>
</feature>
<feature type="binding site" evidence="1">
    <location>
        <begin position="92"/>
        <end position="94"/>
    </location>
    <ligand>
        <name>GTP</name>
        <dbReference type="ChEBI" id="CHEBI:37565"/>
    </ligand>
</feature>
<feature type="binding site" evidence="1">
    <location>
        <position position="114"/>
    </location>
    <ligand>
        <name>GTP</name>
        <dbReference type="ChEBI" id="CHEBI:37565"/>
    </ligand>
</feature>
<feature type="binding site" evidence="1">
    <location>
        <position position="149"/>
    </location>
    <ligand>
        <name>GTP</name>
        <dbReference type="ChEBI" id="CHEBI:37565"/>
    </ligand>
</feature>
<feature type="binding site" evidence="1">
    <location>
        <position position="154"/>
    </location>
    <ligand>
        <name>GTP</name>
        <dbReference type="ChEBI" id="CHEBI:37565"/>
    </ligand>
</feature>
<evidence type="ECO:0000255" key="1">
    <source>
        <dbReference type="HAMAP-Rule" id="MF_00179"/>
    </source>
</evidence>
<comment type="function">
    <text evidence="1">Catalyzes the conversion of GTP to 2,5-diamino-6-ribosylamino-4(3H)-pyrimidinone 5'-phosphate (DARP), formate and pyrophosphate.</text>
</comment>
<comment type="catalytic activity">
    <reaction evidence="1">
        <text>GTP + 4 H2O = 2,5-diamino-6-hydroxy-4-(5-phosphoribosylamino)-pyrimidine + formate + 2 phosphate + 3 H(+)</text>
        <dbReference type="Rhea" id="RHEA:23704"/>
        <dbReference type="ChEBI" id="CHEBI:15377"/>
        <dbReference type="ChEBI" id="CHEBI:15378"/>
        <dbReference type="ChEBI" id="CHEBI:15740"/>
        <dbReference type="ChEBI" id="CHEBI:37565"/>
        <dbReference type="ChEBI" id="CHEBI:43474"/>
        <dbReference type="ChEBI" id="CHEBI:58614"/>
        <dbReference type="EC" id="3.5.4.25"/>
    </reaction>
</comment>
<comment type="cofactor">
    <cofactor evidence="1">
        <name>Zn(2+)</name>
        <dbReference type="ChEBI" id="CHEBI:29105"/>
    </cofactor>
    <text evidence="1">Binds 1 zinc ion per subunit.</text>
</comment>
<comment type="pathway">
    <text evidence="1">Cofactor biosynthesis; riboflavin biosynthesis; 5-amino-6-(D-ribitylamino)uracil from GTP: step 1/4.</text>
</comment>
<comment type="subunit">
    <text evidence="1">Homodimer.</text>
</comment>
<comment type="similarity">
    <text evidence="1">Belongs to the GTP cyclohydrolase II family.</text>
</comment>
<gene>
    <name evidence="1" type="primary">ribA</name>
    <name type="ordered locus">SPA1165</name>
</gene>
<dbReference type="EC" id="3.5.4.25" evidence="1"/>
<dbReference type="EMBL" id="CP000026">
    <property type="protein sequence ID" value="AAV77126.1"/>
    <property type="molecule type" value="Genomic_DNA"/>
</dbReference>
<dbReference type="RefSeq" id="WP_001176284.1">
    <property type="nucleotide sequence ID" value="NC_006511.1"/>
</dbReference>
<dbReference type="SMR" id="Q5PCY8"/>
<dbReference type="GeneID" id="66756188"/>
<dbReference type="KEGG" id="spt:SPA1165"/>
<dbReference type="HOGENOM" id="CLU_020273_2_1_6"/>
<dbReference type="UniPathway" id="UPA00275">
    <property type="reaction ID" value="UER00400"/>
</dbReference>
<dbReference type="Proteomes" id="UP000008185">
    <property type="component" value="Chromosome"/>
</dbReference>
<dbReference type="GO" id="GO:0005829">
    <property type="term" value="C:cytosol"/>
    <property type="evidence" value="ECO:0007669"/>
    <property type="project" value="TreeGrafter"/>
</dbReference>
<dbReference type="GO" id="GO:0005525">
    <property type="term" value="F:GTP binding"/>
    <property type="evidence" value="ECO:0007669"/>
    <property type="project" value="UniProtKB-KW"/>
</dbReference>
<dbReference type="GO" id="GO:0003935">
    <property type="term" value="F:GTP cyclohydrolase II activity"/>
    <property type="evidence" value="ECO:0007669"/>
    <property type="project" value="UniProtKB-UniRule"/>
</dbReference>
<dbReference type="GO" id="GO:0008270">
    <property type="term" value="F:zinc ion binding"/>
    <property type="evidence" value="ECO:0007669"/>
    <property type="project" value="UniProtKB-UniRule"/>
</dbReference>
<dbReference type="GO" id="GO:0009231">
    <property type="term" value="P:riboflavin biosynthetic process"/>
    <property type="evidence" value="ECO:0007669"/>
    <property type="project" value="UniProtKB-UniRule"/>
</dbReference>
<dbReference type="CDD" id="cd00641">
    <property type="entry name" value="GTP_cyclohydro2"/>
    <property type="match status" value="1"/>
</dbReference>
<dbReference type="FunFam" id="3.40.50.10990:FF:000002">
    <property type="entry name" value="GTP cyclohydrolase-2"/>
    <property type="match status" value="1"/>
</dbReference>
<dbReference type="Gene3D" id="3.40.50.10990">
    <property type="entry name" value="GTP cyclohydrolase II"/>
    <property type="match status" value="1"/>
</dbReference>
<dbReference type="HAMAP" id="MF_00179">
    <property type="entry name" value="RibA"/>
    <property type="match status" value="1"/>
</dbReference>
<dbReference type="InterPro" id="IPR032677">
    <property type="entry name" value="GTP_cyclohydro_II"/>
</dbReference>
<dbReference type="InterPro" id="IPR000926">
    <property type="entry name" value="RibA"/>
</dbReference>
<dbReference type="InterPro" id="IPR036144">
    <property type="entry name" value="RibA-like_sf"/>
</dbReference>
<dbReference type="NCBIfam" id="NF001591">
    <property type="entry name" value="PRK00393.1"/>
    <property type="match status" value="1"/>
</dbReference>
<dbReference type="NCBIfam" id="TIGR00505">
    <property type="entry name" value="ribA"/>
    <property type="match status" value="1"/>
</dbReference>
<dbReference type="PANTHER" id="PTHR21327:SF18">
    <property type="entry name" value="3,4-DIHYDROXY-2-BUTANONE 4-PHOSPHATE SYNTHASE"/>
    <property type="match status" value="1"/>
</dbReference>
<dbReference type="PANTHER" id="PTHR21327">
    <property type="entry name" value="GTP CYCLOHYDROLASE II-RELATED"/>
    <property type="match status" value="1"/>
</dbReference>
<dbReference type="Pfam" id="PF00925">
    <property type="entry name" value="GTP_cyclohydro2"/>
    <property type="match status" value="1"/>
</dbReference>
<dbReference type="SUPFAM" id="SSF142695">
    <property type="entry name" value="RibA-like"/>
    <property type="match status" value="1"/>
</dbReference>
<name>RIBA_SALPA</name>
<accession>Q5PCY8</accession>
<reference key="1">
    <citation type="journal article" date="2004" name="Nat. Genet.">
        <title>Comparison of genome degradation in Paratyphi A and Typhi, human-restricted serovars of Salmonella enterica that cause typhoid.</title>
        <authorList>
            <person name="McClelland M."/>
            <person name="Sanderson K.E."/>
            <person name="Clifton S.W."/>
            <person name="Latreille P."/>
            <person name="Porwollik S."/>
            <person name="Sabo A."/>
            <person name="Meyer R."/>
            <person name="Bieri T."/>
            <person name="Ozersky P."/>
            <person name="McLellan M."/>
            <person name="Harkins C.R."/>
            <person name="Wang C."/>
            <person name="Nguyen C."/>
            <person name="Berghoff A."/>
            <person name="Elliott G."/>
            <person name="Kohlberg S."/>
            <person name="Strong C."/>
            <person name="Du F."/>
            <person name="Carter J."/>
            <person name="Kremizki C."/>
            <person name="Layman D."/>
            <person name="Leonard S."/>
            <person name="Sun H."/>
            <person name="Fulton L."/>
            <person name="Nash W."/>
            <person name="Miner T."/>
            <person name="Minx P."/>
            <person name="Delehaunty K."/>
            <person name="Fronick C."/>
            <person name="Magrini V."/>
            <person name="Nhan M."/>
            <person name="Warren W."/>
            <person name="Florea L."/>
            <person name="Spieth J."/>
            <person name="Wilson R.K."/>
        </authorList>
    </citation>
    <scope>NUCLEOTIDE SEQUENCE [LARGE SCALE GENOMIC DNA]</scope>
    <source>
        <strain>ATCC 9150 / SARB42</strain>
    </source>
</reference>
<keyword id="KW-0342">GTP-binding</keyword>
<keyword id="KW-0378">Hydrolase</keyword>
<keyword id="KW-0479">Metal-binding</keyword>
<keyword id="KW-0547">Nucleotide-binding</keyword>
<keyword id="KW-0686">Riboflavin biosynthesis</keyword>
<keyword id="KW-0862">Zinc</keyword>